<feature type="chain" id="PRO_0000116812" description="DUF1769 family protein duc1">
    <location>
        <begin position="1"/>
        <end position="791"/>
    </location>
</feature>
<feature type="region of interest" description="Disordered" evidence="1">
    <location>
        <begin position="158"/>
        <end position="189"/>
    </location>
</feature>
<feature type="region of interest" description="Disordered" evidence="1">
    <location>
        <begin position="381"/>
        <end position="505"/>
    </location>
</feature>
<feature type="region of interest" description="Disordered" evidence="1">
    <location>
        <begin position="542"/>
        <end position="606"/>
    </location>
</feature>
<feature type="region of interest" description="Disordered" evidence="1">
    <location>
        <begin position="630"/>
        <end position="658"/>
    </location>
</feature>
<feature type="short sequence motif" description="FFAT" evidence="6">
    <location>
        <begin position="373"/>
        <end position="379"/>
    </location>
</feature>
<feature type="compositionally biased region" description="Low complexity" evidence="1">
    <location>
        <begin position="174"/>
        <end position="184"/>
    </location>
</feature>
<feature type="compositionally biased region" description="Basic residues" evidence="1">
    <location>
        <begin position="415"/>
        <end position="426"/>
    </location>
</feature>
<feature type="compositionally biased region" description="Low complexity" evidence="1">
    <location>
        <begin position="444"/>
        <end position="453"/>
    </location>
</feature>
<feature type="compositionally biased region" description="Basic and acidic residues" evidence="1">
    <location>
        <begin position="455"/>
        <end position="473"/>
    </location>
</feature>
<feature type="compositionally biased region" description="Basic residues" evidence="1">
    <location>
        <begin position="477"/>
        <end position="487"/>
    </location>
</feature>
<feature type="compositionally biased region" description="Polar residues" evidence="1">
    <location>
        <begin position="555"/>
        <end position="564"/>
    </location>
</feature>
<feature type="compositionally biased region" description="Basic and acidic residues" evidence="1">
    <location>
        <begin position="574"/>
        <end position="586"/>
    </location>
</feature>
<feature type="compositionally biased region" description="Polar residues" evidence="1">
    <location>
        <begin position="587"/>
        <end position="601"/>
    </location>
</feature>
<feature type="modified residue" description="Phosphotyrosine" evidence="2">
    <location>
        <position position="374"/>
    </location>
</feature>
<feature type="modified residue" description="Phosphothreonine" evidence="2">
    <location>
        <position position="376"/>
    </location>
</feature>
<feature type="modified residue" description="Phosphoserine" evidence="2">
    <location>
        <position position="477"/>
    </location>
</feature>
<feature type="modified residue" description="Phosphoserine" evidence="2">
    <location>
        <position position="493"/>
    </location>
</feature>
<feature type="modified residue" description="Phosphoserine" evidence="2">
    <location>
        <position position="574"/>
    </location>
</feature>
<feature type="mutagenesis site" description="Leads to mislocalization of duc1 to the area of cell division." evidence="3">
    <original>YF</original>
    <variation>AA</variation>
    <location>
        <begin position="374"/>
        <end position="375"/>
    </location>
</feature>
<sequence>MKLKVSIGCDAQHTQIAWVNYEGRPTEVDGPLWVGRILVRVRDFDGFTPDGSPPKRDSEYFRGRSRKFQIQAEGRFKKEYNGDQVIYGTQFDHMISTFPESAFRAGMRIAKYIDPAVYYDKYARSPYIMSPFVACVNTLSAWPAPSRLEDAVISLVEADSQESDTESLPEINDSSDVSLSDLPSTNVTPKKTTTQIDVQTNIVTPPITVTAVPDSPNPPAATPATVADNDDLSIVSSDSGNTTAPRKNRHRYWSFAGFSDSTRFSHLNVPAAIPDAPSVKTETSQNVSQLSVKSAATSLAPVEDDEDDELLLHRHITNKHKDFNLHVKQLGLLHKPSLDLEEGYIMDENYGKDVYKHGISNVPDDENEDDLQRYFTALEMQQDQKEQHKKSKNKDPFRKITHPSLHLGKFSTPKLIKRMSLRSKKSLRNDSKSDDVGNSTHRFSTASAASTSAVKTEKEKKMSAPRRSLDKLIRIGSLHRHHHHHHKTDLIESDSGIEASESNRRKSDIFSFSGRNSFSVSRPSSSHSTLSYANDSASSAVNVAGETGSLPPLREQTSITSGVPPSNRLKKHVSTPEKIVEERSIDEVSQSNTPSSKQLPQSVDGKTVTANANSTTVAKQPTSNVALTRPKPVRTATSQSKIPKPVKHIPSDSNNLDPQLGPWRFANPKVDPIEDNSFIFGEHKSVKERRKYFSSSKFCRENFFYDKDVVYCMSFFSPHMDFNTFNLNIGPIRLNVYKHLNSDGHQPIRYMMRETDDEDAVMFVVEFDLLEDDDETVLAEQAKERERRKQT</sequence>
<dbReference type="EMBL" id="CU329672">
    <property type="protein sequence ID" value="CAA19280.2"/>
    <property type="molecule type" value="Genomic_DNA"/>
</dbReference>
<dbReference type="PIR" id="T41573">
    <property type="entry name" value="T41573"/>
</dbReference>
<dbReference type="RefSeq" id="NP_587787.2">
    <property type="nucleotide sequence ID" value="NM_001022780.2"/>
</dbReference>
<dbReference type="BioGRID" id="275292">
    <property type="interactions" value="45"/>
</dbReference>
<dbReference type="FunCoup" id="O74504">
    <property type="interactions" value="1"/>
</dbReference>
<dbReference type="STRING" id="284812.O74504"/>
<dbReference type="iPTMnet" id="O74504"/>
<dbReference type="PaxDb" id="4896-SPCC594.01.1"/>
<dbReference type="EnsemblFungi" id="SPCC594.01.1">
    <property type="protein sequence ID" value="SPCC594.01.1:pep"/>
    <property type="gene ID" value="SPCC594.01"/>
</dbReference>
<dbReference type="PomBase" id="SPCC594.01"/>
<dbReference type="VEuPathDB" id="FungiDB:SPCC594.01"/>
<dbReference type="eggNOG" id="ENOG502RXNE">
    <property type="taxonomic scope" value="Eukaryota"/>
</dbReference>
<dbReference type="HOGENOM" id="CLU_021760_0_0_1"/>
<dbReference type="InParanoid" id="O74504"/>
<dbReference type="OMA" id="APFNAGM"/>
<dbReference type="PRO" id="PR:O74504"/>
<dbReference type="Proteomes" id="UP000002485">
    <property type="component" value="Chromosome III"/>
</dbReference>
<dbReference type="GO" id="GO:0032541">
    <property type="term" value="C:cortical endoplasmic reticulum"/>
    <property type="evidence" value="ECO:0000314"/>
    <property type="project" value="PomBase"/>
</dbReference>
<dbReference type="GO" id="GO:0140268">
    <property type="term" value="C:endoplasmic reticulum-plasma membrane contact site"/>
    <property type="evidence" value="ECO:0000353"/>
    <property type="project" value="PomBase"/>
</dbReference>
<dbReference type="GO" id="GO:0016328">
    <property type="term" value="C:lateral plasma membrane"/>
    <property type="evidence" value="ECO:0000314"/>
    <property type="project" value="PomBase"/>
</dbReference>
<dbReference type="GO" id="GO:0005546">
    <property type="term" value="F:phosphatidylinositol-4,5-bisphosphate binding"/>
    <property type="evidence" value="ECO:0000315"/>
    <property type="project" value="PomBase"/>
</dbReference>
<dbReference type="GO" id="GO:0140550">
    <property type="term" value="F:phosphatidylinositol-4,5-bisphosphate sensor activity"/>
    <property type="evidence" value="ECO:0000314"/>
    <property type="project" value="PomBase"/>
</dbReference>
<dbReference type="GO" id="GO:0007009">
    <property type="term" value="P:plasma membrane organization"/>
    <property type="evidence" value="ECO:0000315"/>
    <property type="project" value="PomBase"/>
</dbReference>
<dbReference type="GO" id="GO:1902648">
    <property type="term" value="P:positive regulation of 1-phosphatidyl-1D-myo-inositol 4,5-bisphosphate biosynthetic process"/>
    <property type="evidence" value="ECO:0000315"/>
    <property type="project" value="PomBase"/>
</dbReference>
<dbReference type="InterPro" id="IPR013897">
    <property type="entry name" value="Duc1"/>
</dbReference>
<dbReference type="InterPro" id="IPR055395">
    <property type="entry name" value="Duc1_FFAT-like"/>
</dbReference>
<dbReference type="PANTHER" id="PTHR34826">
    <property type="entry name" value="UPF0590 PROTEIN C409.17C"/>
    <property type="match status" value="1"/>
</dbReference>
<dbReference type="PANTHER" id="PTHR34826:SF1">
    <property type="entry name" value="UPF0590 PROTEIN C594.01"/>
    <property type="match status" value="1"/>
</dbReference>
<dbReference type="Pfam" id="PF08588">
    <property type="entry name" value="Duc1"/>
    <property type="match status" value="2"/>
</dbReference>
<dbReference type="Pfam" id="PF24794">
    <property type="entry name" value="Duc1_FFAT_like"/>
    <property type="match status" value="1"/>
</dbReference>
<proteinExistence type="evidence at protein level"/>
<protein>
    <recommendedName>
        <fullName evidence="7">DUF1769 family protein duc1</fullName>
    </recommendedName>
    <alternativeName>
        <fullName evidence="4">Domain of unknown function at the cortex</fullName>
    </alternativeName>
</protein>
<keyword id="KW-1003">Cell membrane</keyword>
<keyword id="KW-0472">Membrane</keyword>
<keyword id="KW-0597">Phosphoprotein</keyword>
<keyword id="KW-1185">Reference proteome</keyword>
<evidence type="ECO:0000256" key="1">
    <source>
        <dbReference type="SAM" id="MobiDB-lite"/>
    </source>
</evidence>
<evidence type="ECO:0000269" key="2">
    <source>
    </source>
</evidence>
<evidence type="ECO:0000269" key="3">
    <source>
    </source>
</evidence>
<evidence type="ECO:0000303" key="4">
    <source>
    </source>
</evidence>
<evidence type="ECO:0000305" key="5"/>
<evidence type="ECO:0000305" key="6">
    <source>
    </source>
</evidence>
<evidence type="ECO:0000312" key="7">
    <source>
        <dbReference type="PomBase" id="SPCC594.01"/>
    </source>
</evidence>
<accession>O74504</accession>
<accession>O74961</accession>
<comment type="function">
    <text evidence="3">Promotes the proper distribution of phosphatidylinositol 4,5-bisphosphate (PtdIns(4,5)P2/PIP2) synthesis at the cell membrane (PubMed:39239853). May bind phosphatidylinositol 4,5-bisphosphate (PtdIns(4,5)P2/PIP2) and is required for robust anchoring of the contractile ring to the cell membrane (PubMed:39239853).</text>
</comment>
<comment type="subunit">
    <text evidence="3">Interacts (via FFAT-motif) with scs2 (via MSP domain); the interaction is direct and serves to restrict the localization of duc1 to areas of cell membrane-endoplasmic reticulum contact sites, and away from the cell division site.</text>
</comment>
<comment type="subcellular location">
    <subcellularLocation>
        <location evidence="3">Cell membrane</location>
        <topology evidence="3">Peripheral membrane protein</topology>
    </subcellularLocation>
    <text evidence="3">Localizes to cell membrane-endoplasmic reticulum contact sites in a manner dependent on the VAMP-associated proteins (VAPs) scs2 and scs22 (PubMed:39239853). Less abundant at the cell tips during interphase; during cytokinesis it relocalizes towards the cell ends and is excluded from the medial region (PubMed:39239853).</text>
</comment>
<comment type="disruption phenotype">
    <text evidence="3">Reduces the amount of phosphatidylinositol 4-phosphate 5-kinase its3 at the cell membrane (PubMed:39239853). Leads to sliding of the contractile ring away from the midpoint of the cell, and consequently off-center septation (PubMed:39239853).</text>
</comment>
<comment type="similarity">
    <text evidence="5">Belongs to the UPF0590 family.</text>
</comment>
<name>DUC1_SCHPO</name>
<reference key="1">
    <citation type="journal article" date="2002" name="Nature">
        <title>The genome sequence of Schizosaccharomyces pombe.</title>
        <authorList>
            <person name="Wood V."/>
            <person name="Gwilliam R."/>
            <person name="Rajandream M.A."/>
            <person name="Lyne M.H."/>
            <person name="Lyne R."/>
            <person name="Stewart A."/>
            <person name="Sgouros J.G."/>
            <person name="Peat N."/>
            <person name="Hayles J."/>
            <person name="Baker S.G."/>
            <person name="Basham D."/>
            <person name="Bowman S."/>
            <person name="Brooks K."/>
            <person name="Brown D."/>
            <person name="Brown S."/>
            <person name="Chillingworth T."/>
            <person name="Churcher C.M."/>
            <person name="Collins M."/>
            <person name="Connor R."/>
            <person name="Cronin A."/>
            <person name="Davis P."/>
            <person name="Feltwell T."/>
            <person name="Fraser A."/>
            <person name="Gentles S."/>
            <person name="Goble A."/>
            <person name="Hamlin N."/>
            <person name="Harris D.E."/>
            <person name="Hidalgo J."/>
            <person name="Hodgson G."/>
            <person name="Holroyd S."/>
            <person name="Hornsby T."/>
            <person name="Howarth S."/>
            <person name="Huckle E.J."/>
            <person name="Hunt S."/>
            <person name="Jagels K."/>
            <person name="James K.D."/>
            <person name="Jones L."/>
            <person name="Jones M."/>
            <person name="Leather S."/>
            <person name="McDonald S."/>
            <person name="McLean J."/>
            <person name="Mooney P."/>
            <person name="Moule S."/>
            <person name="Mungall K.L."/>
            <person name="Murphy L.D."/>
            <person name="Niblett D."/>
            <person name="Odell C."/>
            <person name="Oliver K."/>
            <person name="O'Neil S."/>
            <person name="Pearson D."/>
            <person name="Quail M.A."/>
            <person name="Rabbinowitsch E."/>
            <person name="Rutherford K.M."/>
            <person name="Rutter S."/>
            <person name="Saunders D."/>
            <person name="Seeger K."/>
            <person name="Sharp S."/>
            <person name="Skelton J."/>
            <person name="Simmonds M.N."/>
            <person name="Squares R."/>
            <person name="Squares S."/>
            <person name="Stevens K."/>
            <person name="Taylor K."/>
            <person name="Taylor R.G."/>
            <person name="Tivey A."/>
            <person name="Walsh S.V."/>
            <person name="Warren T."/>
            <person name="Whitehead S."/>
            <person name="Woodward J.R."/>
            <person name="Volckaert G."/>
            <person name="Aert R."/>
            <person name="Robben J."/>
            <person name="Grymonprez B."/>
            <person name="Weltjens I."/>
            <person name="Vanstreels E."/>
            <person name="Rieger M."/>
            <person name="Schaefer M."/>
            <person name="Mueller-Auer S."/>
            <person name="Gabel C."/>
            <person name="Fuchs M."/>
            <person name="Duesterhoeft A."/>
            <person name="Fritzc C."/>
            <person name="Holzer E."/>
            <person name="Moestl D."/>
            <person name="Hilbert H."/>
            <person name="Borzym K."/>
            <person name="Langer I."/>
            <person name="Beck A."/>
            <person name="Lehrach H."/>
            <person name="Reinhardt R."/>
            <person name="Pohl T.M."/>
            <person name="Eger P."/>
            <person name="Zimmermann W."/>
            <person name="Wedler H."/>
            <person name="Wambutt R."/>
            <person name="Purnelle B."/>
            <person name="Goffeau A."/>
            <person name="Cadieu E."/>
            <person name="Dreano S."/>
            <person name="Gloux S."/>
            <person name="Lelaure V."/>
            <person name="Mottier S."/>
            <person name="Galibert F."/>
            <person name="Aves S.J."/>
            <person name="Xiang Z."/>
            <person name="Hunt C."/>
            <person name="Moore K."/>
            <person name="Hurst S.M."/>
            <person name="Lucas M."/>
            <person name="Rochet M."/>
            <person name="Gaillardin C."/>
            <person name="Tallada V.A."/>
            <person name="Garzon A."/>
            <person name="Thode G."/>
            <person name="Daga R.R."/>
            <person name="Cruzado L."/>
            <person name="Jimenez J."/>
            <person name="Sanchez M."/>
            <person name="del Rey F."/>
            <person name="Benito J."/>
            <person name="Dominguez A."/>
            <person name="Revuelta J.L."/>
            <person name="Moreno S."/>
            <person name="Armstrong J."/>
            <person name="Forsburg S.L."/>
            <person name="Cerutti L."/>
            <person name="Lowe T."/>
            <person name="McCombie W.R."/>
            <person name="Paulsen I."/>
            <person name="Potashkin J."/>
            <person name="Shpakovski G.V."/>
            <person name="Ussery D."/>
            <person name="Barrell B.G."/>
            <person name="Nurse P."/>
        </authorList>
    </citation>
    <scope>NUCLEOTIDE SEQUENCE [LARGE SCALE GENOMIC DNA]</scope>
    <source>
        <strain>972 / ATCC 24843</strain>
    </source>
</reference>
<reference key="2">
    <citation type="journal article" date="2008" name="J. Proteome Res.">
        <title>Phosphoproteome analysis of fission yeast.</title>
        <authorList>
            <person name="Wilson-Grady J.T."/>
            <person name="Villen J."/>
            <person name="Gygi S.P."/>
        </authorList>
    </citation>
    <scope>PHOSPHORYLATION [LARGE SCALE ANALYSIS] AT TYR-374; THR-376; SER-477; SER-493 AND SER-574</scope>
    <scope>IDENTIFICATION BY MASS SPECTROMETRY</scope>
</reference>
<reference key="3">
    <citation type="journal article" date="2024" name="J. Cell Sci.">
        <title>Fission yeast Duc1 links to ER-PM contact sites and influences PM lipid composition and cytokinetic ring anchoring.</title>
        <authorList>
            <person name="Willet A.H."/>
            <person name="Park J.S."/>
            <person name="Snider C.E."/>
            <person name="Huang J.J."/>
            <person name="Chen J.S."/>
            <person name="Gould K.L."/>
        </authorList>
    </citation>
    <scope>FUNCTION</scope>
    <scope>INTERACTION WITH SCS2</scope>
    <scope>SUBCELLULAR LOCATION</scope>
    <scope>DISRUPTION PHENOTYPE</scope>
    <scope>MOTIF FFAT</scope>
    <scope>MUTAGENESIS OF 374-TYR-PHE-375</scope>
</reference>
<gene>
    <name evidence="4" type="primary">duc1</name>
    <name type="ORF">SPCC594.01</name>
    <name type="ORF">SPCC736.16</name>
</gene>
<organism>
    <name type="scientific">Schizosaccharomyces pombe (strain 972 / ATCC 24843)</name>
    <name type="common">Fission yeast</name>
    <dbReference type="NCBI Taxonomy" id="284812"/>
    <lineage>
        <taxon>Eukaryota</taxon>
        <taxon>Fungi</taxon>
        <taxon>Dikarya</taxon>
        <taxon>Ascomycota</taxon>
        <taxon>Taphrinomycotina</taxon>
        <taxon>Schizosaccharomycetes</taxon>
        <taxon>Schizosaccharomycetales</taxon>
        <taxon>Schizosaccharomycetaceae</taxon>
        <taxon>Schizosaccharomyces</taxon>
    </lineage>
</organism>